<protein>
    <recommendedName>
        <fullName evidence="1">Na(+)/H(+) antiporter NhaA 1</fullName>
    </recommendedName>
    <alternativeName>
        <fullName evidence="1">Sodium/proton antiporter NhaA 1</fullName>
    </alternativeName>
</protein>
<name>NHAA1_CAMHC</name>
<feature type="chain" id="PRO_0000334253" description="Na(+)/H(+) antiporter NhaA 1">
    <location>
        <begin position="1"/>
        <end position="396"/>
    </location>
</feature>
<feature type="transmembrane region" description="Helical" evidence="1">
    <location>
        <begin position="15"/>
        <end position="35"/>
    </location>
</feature>
<feature type="transmembrane region" description="Helical" evidence="1">
    <location>
        <begin position="60"/>
        <end position="80"/>
    </location>
</feature>
<feature type="transmembrane region" description="Helical" evidence="1">
    <location>
        <begin position="96"/>
        <end position="116"/>
    </location>
</feature>
<feature type="transmembrane region" description="Helical" evidence="1">
    <location>
        <begin position="126"/>
        <end position="146"/>
    </location>
</feature>
<feature type="transmembrane region" description="Helical" evidence="1">
    <location>
        <begin position="155"/>
        <end position="175"/>
    </location>
</feature>
<feature type="transmembrane region" description="Helical" evidence="1">
    <location>
        <begin position="179"/>
        <end position="199"/>
    </location>
</feature>
<feature type="transmembrane region" description="Helical" evidence="1">
    <location>
        <begin position="207"/>
        <end position="227"/>
    </location>
</feature>
<feature type="transmembrane region" description="Helical" evidence="1">
    <location>
        <begin position="255"/>
        <end position="275"/>
    </location>
</feature>
<feature type="transmembrane region" description="Helical" evidence="1">
    <location>
        <begin position="290"/>
        <end position="312"/>
    </location>
</feature>
<feature type="transmembrane region" description="Helical" evidence="1">
    <location>
        <begin position="329"/>
        <end position="349"/>
    </location>
</feature>
<feature type="transmembrane region" description="Helical" evidence="1">
    <location>
        <begin position="363"/>
        <end position="383"/>
    </location>
</feature>
<reference key="1">
    <citation type="submission" date="2007-07" db="EMBL/GenBank/DDBJ databases">
        <title>Complete genome sequence of Campylobacter hominis ATCC BAA-381, a commensal isolated from the human gastrointestinal tract.</title>
        <authorList>
            <person name="Fouts D.E."/>
            <person name="Mongodin E.F."/>
            <person name="Puiu D."/>
            <person name="Sebastian Y."/>
            <person name="Miller W.G."/>
            <person name="Mandrell R.E."/>
            <person name="Nelson K.E."/>
        </authorList>
    </citation>
    <scope>NUCLEOTIDE SEQUENCE [LARGE SCALE GENOMIC DNA]</scope>
    <source>
        <strain>ATCC BAA-381 / DSM 21671 / CCUG 45161 / LMG 19568 / NCTC 13146 / CH001A</strain>
    </source>
</reference>
<proteinExistence type="inferred from homology"/>
<sequence length="396" mass="43589">MRISIKKILDNESTAGIFLLAAAVFALIFSNVGFLHDIYRHFLELPIVIGVSDYKLDKPLEFWVNDALMAIFFFSIGLELKRERIEGQLRHFSQVFLPSFAAIGGVIFPAVIFAVINFSDSHALRGWAIPTATDIAFAVGVMALLGRRIPTSLKIFVLTLAIMDDLCAIVIIALFYSTALNFTYLGLAFVCFLVLLVMCKLKIPQKIPFVIMSILLWIFVLHSGIHATIAGVAAGFCIPINTSRGNSMLKEMESSLGYFVNYVVLPLFAFANAGVDMRGMQISYLFGPVPLGVMLGLFLGKQLGIFTFSWFLIKMNIVGMPDRANFKQLYAVAIICGIGFTMALFVDNLSYGGSDLYHHTDKLAILLGSIISGVVGYFVAKAVGNKPKKGIKNEYN</sequence>
<keyword id="KW-0050">Antiport</keyword>
<keyword id="KW-0997">Cell inner membrane</keyword>
<keyword id="KW-1003">Cell membrane</keyword>
<keyword id="KW-0406">Ion transport</keyword>
<keyword id="KW-0472">Membrane</keyword>
<keyword id="KW-1185">Reference proteome</keyword>
<keyword id="KW-0915">Sodium</keyword>
<keyword id="KW-0739">Sodium transport</keyword>
<keyword id="KW-0812">Transmembrane</keyword>
<keyword id="KW-1133">Transmembrane helix</keyword>
<keyword id="KW-0813">Transport</keyword>
<gene>
    <name evidence="1" type="primary">nhaA1</name>
    <name type="ordered locus">CHAB381_0028</name>
</gene>
<dbReference type="EMBL" id="CP000776">
    <property type="protein sequence ID" value="ABS52021.1"/>
    <property type="molecule type" value="Genomic_DNA"/>
</dbReference>
<dbReference type="RefSeq" id="WP_011991497.1">
    <property type="nucleotide sequence ID" value="NC_009714.1"/>
</dbReference>
<dbReference type="SMR" id="A7HZF9"/>
<dbReference type="STRING" id="360107.CHAB381_0028"/>
<dbReference type="KEGG" id="cha:CHAB381_0028"/>
<dbReference type="eggNOG" id="COG3004">
    <property type="taxonomic scope" value="Bacteria"/>
</dbReference>
<dbReference type="HOGENOM" id="CLU_015803_1_0_7"/>
<dbReference type="OrthoDB" id="9808135at2"/>
<dbReference type="Proteomes" id="UP000002407">
    <property type="component" value="Chromosome"/>
</dbReference>
<dbReference type="GO" id="GO:0005886">
    <property type="term" value="C:plasma membrane"/>
    <property type="evidence" value="ECO:0007669"/>
    <property type="project" value="UniProtKB-SubCell"/>
</dbReference>
<dbReference type="GO" id="GO:0015385">
    <property type="term" value="F:sodium:proton antiporter activity"/>
    <property type="evidence" value="ECO:0007669"/>
    <property type="project" value="TreeGrafter"/>
</dbReference>
<dbReference type="GO" id="GO:0006885">
    <property type="term" value="P:regulation of pH"/>
    <property type="evidence" value="ECO:0007669"/>
    <property type="project" value="InterPro"/>
</dbReference>
<dbReference type="Gene3D" id="1.20.1530.10">
    <property type="entry name" value="Na+/H+ antiporter like domain"/>
    <property type="match status" value="1"/>
</dbReference>
<dbReference type="HAMAP" id="MF_01844">
    <property type="entry name" value="NhaA"/>
    <property type="match status" value="1"/>
</dbReference>
<dbReference type="InterPro" id="IPR023171">
    <property type="entry name" value="Na/H_antiporter_dom_sf"/>
</dbReference>
<dbReference type="InterPro" id="IPR004670">
    <property type="entry name" value="NhaA"/>
</dbReference>
<dbReference type="NCBIfam" id="TIGR00773">
    <property type="entry name" value="NhaA"/>
    <property type="match status" value="1"/>
</dbReference>
<dbReference type="NCBIfam" id="NF007111">
    <property type="entry name" value="PRK09560.1"/>
    <property type="match status" value="1"/>
</dbReference>
<dbReference type="NCBIfam" id="NF007112">
    <property type="entry name" value="PRK09561.1"/>
    <property type="match status" value="1"/>
</dbReference>
<dbReference type="PANTHER" id="PTHR30341:SF0">
    <property type="entry name" value="NA(+)_H(+) ANTIPORTER NHAA"/>
    <property type="match status" value="1"/>
</dbReference>
<dbReference type="PANTHER" id="PTHR30341">
    <property type="entry name" value="SODIUM ION/PROTON ANTIPORTER NHAA-RELATED"/>
    <property type="match status" value="1"/>
</dbReference>
<dbReference type="Pfam" id="PF06965">
    <property type="entry name" value="Na_H_antiport_1"/>
    <property type="match status" value="1"/>
</dbReference>
<organism>
    <name type="scientific">Campylobacter hominis (strain ATCC BAA-381 / DSM 21671 / CCUG 45161 / LMG 19568 / NCTC 13146 / CH001A)</name>
    <dbReference type="NCBI Taxonomy" id="360107"/>
    <lineage>
        <taxon>Bacteria</taxon>
        <taxon>Pseudomonadati</taxon>
        <taxon>Campylobacterota</taxon>
        <taxon>Epsilonproteobacteria</taxon>
        <taxon>Campylobacterales</taxon>
        <taxon>Campylobacteraceae</taxon>
        <taxon>Campylobacter</taxon>
    </lineage>
</organism>
<evidence type="ECO:0000255" key="1">
    <source>
        <dbReference type="HAMAP-Rule" id="MF_01844"/>
    </source>
</evidence>
<accession>A7HZF9</accession>
<comment type="function">
    <text evidence="1">Na(+)/H(+) antiporter that extrudes sodium in exchange for external protons.</text>
</comment>
<comment type="catalytic activity">
    <reaction evidence="1">
        <text>Na(+)(in) + 2 H(+)(out) = Na(+)(out) + 2 H(+)(in)</text>
        <dbReference type="Rhea" id="RHEA:29251"/>
        <dbReference type="ChEBI" id="CHEBI:15378"/>
        <dbReference type="ChEBI" id="CHEBI:29101"/>
    </reaction>
    <physiologicalReaction direction="left-to-right" evidence="1">
        <dbReference type="Rhea" id="RHEA:29252"/>
    </physiologicalReaction>
</comment>
<comment type="subcellular location">
    <subcellularLocation>
        <location evidence="1">Cell inner membrane</location>
        <topology evidence="1">Multi-pass membrane protein</topology>
    </subcellularLocation>
</comment>
<comment type="similarity">
    <text evidence="1">Belongs to the NhaA Na(+)/H(+) (TC 2.A.33) antiporter family.</text>
</comment>